<dbReference type="EMBL" id="BA000012">
    <property type="protein sequence ID" value="BAB54270.1"/>
    <property type="molecule type" value="Genomic_DNA"/>
</dbReference>
<dbReference type="RefSeq" id="WP_010915212.1">
    <property type="nucleotide sequence ID" value="NC_002678.2"/>
</dbReference>
<dbReference type="SMR" id="Q984P3"/>
<dbReference type="KEGG" id="mlo:mlr7912"/>
<dbReference type="PATRIC" id="fig|266835.9.peg.6332"/>
<dbReference type="eggNOG" id="COG0322">
    <property type="taxonomic scope" value="Bacteria"/>
</dbReference>
<dbReference type="HOGENOM" id="CLU_014841_3_0_5"/>
<dbReference type="Proteomes" id="UP000000552">
    <property type="component" value="Chromosome"/>
</dbReference>
<dbReference type="GO" id="GO:0005737">
    <property type="term" value="C:cytoplasm"/>
    <property type="evidence" value="ECO:0007669"/>
    <property type="project" value="UniProtKB-SubCell"/>
</dbReference>
<dbReference type="GO" id="GO:0009380">
    <property type="term" value="C:excinuclease repair complex"/>
    <property type="evidence" value="ECO:0007669"/>
    <property type="project" value="InterPro"/>
</dbReference>
<dbReference type="GO" id="GO:0003677">
    <property type="term" value="F:DNA binding"/>
    <property type="evidence" value="ECO:0007669"/>
    <property type="project" value="UniProtKB-UniRule"/>
</dbReference>
<dbReference type="GO" id="GO:0009381">
    <property type="term" value="F:excinuclease ABC activity"/>
    <property type="evidence" value="ECO:0007669"/>
    <property type="project" value="UniProtKB-UniRule"/>
</dbReference>
<dbReference type="GO" id="GO:0006289">
    <property type="term" value="P:nucleotide-excision repair"/>
    <property type="evidence" value="ECO:0007669"/>
    <property type="project" value="UniProtKB-UniRule"/>
</dbReference>
<dbReference type="GO" id="GO:0009432">
    <property type="term" value="P:SOS response"/>
    <property type="evidence" value="ECO:0007669"/>
    <property type="project" value="UniProtKB-UniRule"/>
</dbReference>
<dbReference type="CDD" id="cd10434">
    <property type="entry name" value="GIY-YIG_UvrC_Cho"/>
    <property type="match status" value="1"/>
</dbReference>
<dbReference type="FunFam" id="3.30.420.340:FF:000001">
    <property type="entry name" value="UvrABC system protein C"/>
    <property type="match status" value="1"/>
</dbReference>
<dbReference type="FunFam" id="3.40.1440.10:FF:000001">
    <property type="entry name" value="UvrABC system protein C"/>
    <property type="match status" value="1"/>
</dbReference>
<dbReference type="Gene3D" id="1.10.150.20">
    <property type="entry name" value="5' to 3' exonuclease, C-terminal subdomain"/>
    <property type="match status" value="1"/>
</dbReference>
<dbReference type="Gene3D" id="3.40.1440.10">
    <property type="entry name" value="GIY-YIG endonuclease"/>
    <property type="match status" value="1"/>
</dbReference>
<dbReference type="Gene3D" id="4.10.860.10">
    <property type="entry name" value="UVR domain"/>
    <property type="match status" value="1"/>
</dbReference>
<dbReference type="Gene3D" id="3.30.420.340">
    <property type="entry name" value="UvrC, RNAse H endonuclease domain"/>
    <property type="match status" value="1"/>
</dbReference>
<dbReference type="HAMAP" id="MF_00203">
    <property type="entry name" value="UvrC"/>
    <property type="match status" value="1"/>
</dbReference>
<dbReference type="InterPro" id="IPR000305">
    <property type="entry name" value="GIY-YIG_endonuc"/>
</dbReference>
<dbReference type="InterPro" id="IPR035901">
    <property type="entry name" value="GIY-YIG_endonuc_sf"/>
</dbReference>
<dbReference type="InterPro" id="IPR047296">
    <property type="entry name" value="GIY-YIG_UvrC_Cho"/>
</dbReference>
<dbReference type="InterPro" id="IPR003583">
    <property type="entry name" value="Hlx-hairpin-Hlx_DNA-bd_motif"/>
</dbReference>
<dbReference type="InterPro" id="IPR010994">
    <property type="entry name" value="RuvA_2-like"/>
</dbReference>
<dbReference type="InterPro" id="IPR001943">
    <property type="entry name" value="UVR_dom"/>
</dbReference>
<dbReference type="InterPro" id="IPR036876">
    <property type="entry name" value="UVR_dom_sf"/>
</dbReference>
<dbReference type="InterPro" id="IPR050066">
    <property type="entry name" value="UvrABC_protein_C"/>
</dbReference>
<dbReference type="InterPro" id="IPR004791">
    <property type="entry name" value="UvrC"/>
</dbReference>
<dbReference type="InterPro" id="IPR001162">
    <property type="entry name" value="UvrC_RNase_H_dom"/>
</dbReference>
<dbReference type="InterPro" id="IPR038476">
    <property type="entry name" value="UvrC_RNase_H_dom_sf"/>
</dbReference>
<dbReference type="NCBIfam" id="NF001824">
    <property type="entry name" value="PRK00558.1-5"/>
    <property type="match status" value="1"/>
</dbReference>
<dbReference type="NCBIfam" id="TIGR00194">
    <property type="entry name" value="uvrC"/>
    <property type="match status" value="1"/>
</dbReference>
<dbReference type="PANTHER" id="PTHR30562:SF1">
    <property type="entry name" value="UVRABC SYSTEM PROTEIN C"/>
    <property type="match status" value="1"/>
</dbReference>
<dbReference type="PANTHER" id="PTHR30562">
    <property type="entry name" value="UVRC/OXIDOREDUCTASE"/>
    <property type="match status" value="1"/>
</dbReference>
<dbReference type="Pfam" id="PF01541">
    <property type="entry name" value="GIY-YIG"/>
    <property type="match status" value="1"/>
</dbReference>
<dbReference type="Pfam" id="PF14520">
    <property type="entry name" value="HHH_5"/>
    <property type="match status" value="1"/>
</dbReference>
<dbReference type="Pfam" id="PF02151">
    <property type="entry name" value="UVR"/>
    <property type="match status" value="1"/>
</dbReference>
<dbReference type="Pfam" id="PF22920">
    <property type="entry name" value="UvrC_RNaseH"/>
    <property type="match status" value="1"/>
</dbReference>
<dbReference type="Pfam" id="PF08459">
    <property type="entry name" value="UvrC_RNaseH_dom"/>
    <property type="match status" value="1"/>
</dbReference>
<dbReference type="SMART" id="SM00465">
    <property type="entry name" value="GIYc"/>
    <property type="match status" value="1"/>
</dbReference>
<dbReference type="SMART" id="SM00278">
    <property type="entry name" value="HhH1"/>
    <property type="match status" value="2"/>
</dbReference>
<dbReference type="SUPFAM" id="SSF46600">
    <property type="entry name" value="C-terminal UvrC-binding domain of UvrB"/>
    <property type="match status" value="1"/>
</dbReference>
<dbReference type="SUPFAM" id="SSF82771">
    <property type="entry name" value="GIY-YIG endonuclease"/>
    <property type="match status" value="1"/>
</dbReference>
<dbReference type="SUPFAM" id="SSF47781">
    <property type="entry name" value="RuvA domain 2-like"/>
    <property type="match status" value="1"/>
</dbReference>
<dbReference type="PROSITE" id="PS50164">
    <property type="entry name" value="GIY_YIG"/>
    <property type="match status" value="1"/>
</dbReference>
<dbReference type="PROSITE" id="PS50151">
    <property type="entry name" value="UVR"/>
    <property type="match status" value="1"/>
</dbReference>
<dbReference type="PROSITE" id="PS50165">
    <property type="entry name" value="UVRC"/>
    <property type="match status" value="1"/>
</dbReference>
<feature type="chain" id="PRO_0000264932" description="UvrABC system protein C">
    <location>
        <begin position="1"/>
        <end position="688"/>
    </location>
</feature>
<feature type="domain" description="GIY-YIG" evidence="1">
    <location>
        <begin position="71"/>
        <end position="149"/>
    </location>
</feature>
<feature type="domain" description="UVR" evidence="1">
    <location>
        <begin position="259"/>
        <end position="294"/>
    </location>
</feature>
<feature type="region of interest" description="Disordered" evidence="2">
    <location>
        <begin position="1"/>
        <end position="20"/>
    </location>
</feature>
<feature type="compositionally biased region" description="Basic and acidic residues" evidence="2">
    <location>
        <begin position="1"/>
        <end position="14"/>
    </location>
</feature>
<proteinExistence type="inferred from homology"/>
<accession>Q984P3</accession>
<organism>
    <name type="scientific">Mesorhizobium japonicum (strain LMG 29417 / CECT 9101 / MAFF 303099)</name>
    <name type="common">Mesorhizobium loti (strain MAFF 303099)</name>
    <dbReference type="NCBI Taxonomy" id="266835"/>
    <lineage>
        <taxon>Bacteria</taxon>
        <taxon>Pseudomonadati</taxon>
        <taxon>Pseudomonadota</taxon>
        <taxon>Alphaproteobacteria</taxon>
        <taxon>Hyphomicrobiales</taxon>
        <taxon>Phyllobacteriaceae</taxon>
        <taxon>Mesorhizobium</taxon>
    </lineage>
</organism>
<comment type="function">
    <text evidence="1">The UvrABC repair system catalyzes the recognition and processing of DNA lesions. UvrC both incises the 5' and 3' sides of the lesion. The N-terminal half is responsible for the 3' incision and the C-terminal half is responsible for the 5' incision.</text>
</comment>
<comment type="subunit">
    <text evidence="1">Interacts with UvrB in an incision complex.</text>
</comment>
<comment type="subcellular location">
    <subcellularLocation>
        <location evidence="1">Cytoplasm</location>
    </subcellularLocation>
</comment>
<comment type="similarity">
    <text evidence="1">Belongs to the UvrC family.</text>
</comment>
<sequence>MSPLDQKNKPRGGADDLPPEIDLEDEALEEIVEPTGPDVAFTAIDWTPHAGDAEGMVGAEVIQTLVKRLPNAPGVYRMMNAAGDVLYVGKARSLKKRVTNYAQGRFHTNRIGRMVRETSTMEFVVTRTEIEALLLEANLIKRLRPRFNVLMRDDKSFPYILLTGDHVSPGIYKHRGARSRKGDYFGPFASAGAVGRTINSLQRAFLLRSCTNSFYENRTRPCLLYQIKRCAGPCTGEISHEGYAELVAEAKDFLSGRSQKVKTEISAAMQQASEDLDFERAAIYRDRLAALSHVQSHQGINPATVDEADVFAIHQEGGQVCIQVFFFRTGQNWGNRAYFPKADPALEAAEVLGSFLAQFYDDKPTPRNILLSRGVEDQELLGEALSTRAGRKVTISVPQRGEKKDLTDNALQNAREALGRRLAETSTQGRLLAGFAETFGLAKPPVRIEVYDNSHIMGTNAVGAMVVAGPEGFVKNQYRKFNIRSTEITPGDDFGMMREVMERRFSRLLKEHGDVAPNDAASAEAGDDIEDDISGSFPAWPDVILIDGGQGQMTAVRKILADLGIEDRVVAIGIAKGQDRDAGRERFFVKGRDSFSLPVRDPVLYFVQRLRDEVHRFAIGSHRARRKKEMVKSPLDEIAGIGPGRKRALLLAFGTAKAVSRAAIEDLRKVDGISEQVAKLVYNHFHES</sequence>
<keyword id="KW-0963">Cytoplasm</keyword>
<keyword id="KW-0227">DNA damage</keyword>
<keyword id="KW-0228">DNA excision</keyword>
<keyword id="KW-0234">DNA repair</keyword>
<keyword id="KW-0267">Excision nuclease</keyword>
<keyword id="KW-0742">SOS response</keyword>
<evidence type="ECO:0000255" key="1">
    <source>
        <dbReference type="HAMAP-Rule" id="MF_00203"/>
    </source>
</evidence>
<evidence type="ECO:0000256" key="2">
    <source>
        <dbReference type="SAM" id="MobiDB-lite"/>
    </source>
</evidence>
<gene>
    <name evidence="1" type="primary">uvrC</name>
    <name type="ordered locus">mlr7912</name>
</gene>
<name>UVRC_RHILO</name>
<protein>
    <recommendedName>
        <fullName evidence="1">UvrABC system protein C</fullName>
        <shortName evidence="1">Protein UvrC</shortName>
    </recommendedName>
    <alternativeName>
        <fullName evidence="1">Excinuclease ABC subunit C</fullName>
    </alternativeName>
</protein>
<reference key="1">
    <citation type="journal article" date="2000" name="DNA Res.">
        <title>Complete genome structure of the nitrogen-fixing symbiotic bacterium Mesorhizobium loti.</title>
        <authorList>
            <person name="Kaneko T."/>
            <person name="Nakamura Y."/>
            <person name="Sato S."/>
            <person name="Asamizu E."/>
            <person name="Kato T."/>
            <person name="Sasamoto S."/>
            <person name="Watanabe A."/>
            <person name="Idesawa K."/>
            <person name="Ishikawa A."/>
            <person name="Kawashima K."/>
            <person name="Kimura T."/>
            <person name="Kishida Y."/>
            <person name="Kiyokawa C."/>
            <person name="Kohara M."/>
            <person name="Matsumoto M."/>
            <person name="Matsuno A."/>
            <person name="Mochizuki Y."/>
            <person name="Nakayama S."/>
            <person name="Nakazaki N."/>
            <person name="Shimpo S."/>
            <person name="Sugimoto M."/>
            <person name="Takeuchi C."/>
            <person name="Yamada M."/>
            <person name="Tabata S."/>
        </authorList>
    </citation>
    <scope>NUCLEOTIDE SEQUENCE [LARGE SCALE GENOMIC DNA]</scope>
    <source>
        <strain>LMG 29417 / CECT 9101 / MAFF 303099</strain>
    </source>
</reference>